<organism>
    <name type="scientific">Listeria monocytogenes serovar 1/2a (strain ATCC BAA-679 / EGD-e)</name>
    <dbReference type="NCBI Taxonomy" id="169963"/>
    <lineage>
        <taxon>Bacteria</taxon>
        <taxon>Bacillati</taxon>
        <taxon>Bacillota</taxon>
        <taxon>Bacilli</taxon>
        <taxon>Bacillales</taxon>
        <taxon>Listeriaceae</taxon>
        <taxon>Listeria</taxon>
    </lineage>
</organism>
<protein>
    <recommendedName>
        <fullName evidence="1">Shikimate dehydrogenase (NADP(+))</fullName>
        <shortName evidence="1">SDH</shortName>
        <ecNumber evidence="1">1.1.1.25</ecNumber>
    </recommendedName>
</protein>
<accession>Q8Y9N5</accession>
<keyword id="KW-0002">3D-structure</keyword>
<keyword id="KW-0028">Amino-acid biosynthesis</keyword>
<keyword id="KW-0057">Aromatic amino acid biosynthesis</keyword>
<keyword id="KW-0521">NADP</keyword>
<keyword id="KW-0560">Oxidoreductase</keyword>
<keyword id="KW-1185">Reference proteome</keyword>
<dbReference type="EC" id="1.1.1.25" evidence="1"/>
<dbReference type="EMBL" id="AL591975">
    <property type="protein sequence ID" value="CAC98569.1"/>
    <property type="molecule type" value="Genomic_DNA"/>
</dbReference>
<dbReference type="PIR" id="AC1136">
    <property type="entry name" value="AC1136"/>
</dbReference>
<dbReference type="RefSeq" id="NP_464018.1">
    <property type="nucleotide sequence ID" value="NC_003210.1"/>
</dbReference>
<dbReference type="RefSeq" id="WP_003725703.1">
    <property type="nucleotide sequence ID" value="NZ_CP149495.1"/>
</dbReference>
<dbReference type="PDB" id="3TNL">
    <property type="method" value="X-ray"/>
    <property type="resolution" value="1.45 A"/>
    <property type="chains" value="A/B/C/D=1-291"/>
</dbReference>
<dbReference type="PDB" id="3TOZ">
    <property type="method" value="X-ray"/>
    <property type="resolution" value="2.20 A"/>
    <property type="chains" value="A/B/C/D/E/F/G/H=1-291"/>
</dbReference>
<dbReference type="PDBsum" id="3TNL"/>
<dbReference type="PDBsum" id="3TOZ"/>
<dbReference type="SMR" id="Q8Y9N5"/>
<dbReference type="STRING" id="169963.gene:17593141"/>
<dbReference type="PaxDb" id="169963-lmo0490"/>
<dbReference type="EnsemblBacteria" id="CAC98569">
    <property type="protein sequence ID" value="CAC98569"/>
    <property type="gene ID" value="CAC98569"/>
</dbReference>
<dbReference type="GeneID" id="985396"/>
<dbReference type="KEGG" id="lmo:lmo0490"/>
<dbReference type="PATRIC" id="fig|169963.11.peg.509"/>
<dbReference type="eggNOG" id="COG0169">
    <property type="taxonomic scope" value="Bacteria"/>
</dbReference>
<dbReference type="HOGENOM" id="CLU_044063_4_4_9"/>
<dbReference type="OrthoDB" id="9792692at2"/>
<dbReference type="PhylomeDB" id="Q8Y9N5"/>
<dbReference type="BioCyc" id="LMON169963:LMO0490-MONOMER"/>
<dbReference type="UniPathway" id="UPA00053">
    <property type="reaction ID" value="UER00087"/>
</dbReference>
<dbReference type="EvolutionaryTrace" id="Q8Y9N5"/>
<dbReference type="Proteomes" id="UP000000817">
    <property type="component" value="Chromosome"/>
</dbReference>
<dbReference type="GO" id="GO:0050661">
    <property type="term" value="F:NADP binding"/>
    <property type="evidence" value="ECO:0007669"/>
    <property type="project" value="InterPro"/>
</dbReference>
<dbReference type="GO" id="GO:0004764">
    <property type="term" value="F:shikimate 3-dehydrogenase (NADP+) activity"/>
    <property type="evidence" value="ECO:0000318"/>
    <property type="project" value="GO_Central"/>
</dbReference>
<dbReference type="GO" id="GO:0008652">
    <property type="term" value="P:amino acid biosynthetic process"/>
    <property type="evidence" value="ECO:0007669"/>
    <property type="project" value="UniProtKB-KW"/>
</dbReference>
<dbReference type="GO" id="GO:0009073">
    <property type="term" value="P:aromatic amino acid family biosynthetic process"/>
    <property type="evidence" value="ECO:0007669"/>
    <property type="project" value="UniProtKB-KW"/>
</dbReference>
<dbReference type="GO" id="GO:0009423">
    <property type="term" value="P:chorismate biosynthetic process"/>
    <property type="evidence" value="ECO:0000318"/>
    <property type="project" value="GO_Central"/>
</dbReference>
<dbReference type="GO" id="GO:0019632">
    <property type="term" value="P:shikimate metabolic process"/>
    <property type="evidence" value="ECO:0000318"/>
    <property type="project" value="GO_Central"/>
</dbReference>
<dbReference type="CDD" id="cd01065">
    <property type="entry name" value="NAD_bind_Shikimate_DH"/>
    <property type="match status" value="1"/>
</dbReference>
<dbReference type="FunFam" id="3.40.50.10860:FF:000004">
    <property type="entry name" value="Quinate/shikimate dehydrogenase"/>
    <property type="match status" value="1"/>
</dbReference>
<dbReference type="FunFam" id="3.40.50.720:FF:000086">
    <property type="entry name" value="Quinate/shikimate dehydrogenase"/>
    <property type="match status" value="1"/>
</dbReference>
<dbReference type="Gene3D" id="3.40.50.10860">
    <property type="entry name" value="Leucine Dehydrogenase, chain A, domain 1"/>
    <property type="match status" value="1"/>
</dbReference>
<dbReference type="Gene3D" id="3.40.50.720">
    <property type="entry name" value="NAD(P)-binding Rossmann-like Domain"/>
    <property type="match status" value="1"/>
</dbReference>
<dbReference type="HAMAP" id="MF_00222">
    <property type="entry name" value="Shikimate_DH_AroE"/>
    <property type="match status" value="1"/>
</dbReference>
<dbReference type="InterPro" id="IPR046346">
    <property type="entry name" value="Aminoacid_DH-like_N_sf"/>
</dbReference>
<dbReference type="InterPro" id="IPR036291">
    <property type="entry name" value="NAD(P)-bd_dom_sf"/>
</dbReference>
<dbReference type="InterPro" id="IPR041121">
    <property type="entry name" value="SDH_C"/>
</dbReference>
<dbReference type="InterPro" id="IPR011342">
    <property type="entry name" value="Shikimate_DH"/>
</dbReference>
<dbReference type="InterPro" id="IPR013708">
    <property type="entry name" value="Shikimate_DH-bd_N"/>
</dbReference>
<dbReference type="InterPro" id="IPR022893">
    <property type="entry name" value="Shikimate_DH_fam"/>
</dbReference>
<dbReference type="NCBIfam" id="TIGR00507">
    <property type="entry name" value="aroE"/>
    <property type="match status" value="1"/>
</dbReference>
<dbReference type="NCBIfam" id="NF001313">
    <property type="entry name" value="PRK00258.2-1"/>
    <property type="match status" value="1"/>
</dbReference>
<dbReference type="NCBIfam" id="NF001319">
    <property type="entry name" value="PRK00258.3-3"/>
    <property type="match status" value="1"/>
</dbReference>
<dbReference type="PANTHER" id="PTHR21089:SF1">
    <property type="entry name" value="BIFUNCTIONAL 3-DEHYDROQUINATE DEHYDRATASE_SHIKIMATE DEHYDROGENASE, CHLOROPLASTIC"/>
    <property type="match status" value="1"/>
</dbReference>
<dbReference type="PANTHER" id="PTHR21089">
    <property type="entry name" value="SHIKIMATE DEHYDROGENASE"/>
    <property type="match status" value="1"/>
</dbReference>
<dbReference type="Pfam" id="PF18317">
    <property type="entry name" value="SDH_C"/>
    <property type="match status" value="1"/>
</dbReference>
<dbReference type="Pfam" id="PF08501">
    <property type="entry name" value="Shikimate_dh_N"/>
    <property type="match status" value="1"/>
</dbReference>
<dbReference type="SUPFAM" id="SSF53223">
    <property type="entry name" value="Aminoacid dehydrogenase-like, N-terminal domain"/>
    <property type="match status" value="1"/>
</dbReference>
<dbReference type="SUPFAM" id="SSF51735">
    <property type="entry name" value="NAD(P)-binding Rossmann-fold domains"/>
    <property type="match status" value="1"/>
</dbReference>
<proteinExistence type="evidence at protein level"/>
<feature type="chain" id="PRO_0000136014" description="Shikimate dehydrogenase (NADP(+))">
    <location>
        <begin position="1"/>
        <end position="291"/>
    </location>
</feature>
<feature type="active site" description="Proton acceptor" evidence="1 3">
    <location>
        <position position="77"/>
    </location>
</feature>
<feature type="binding site" evidence="1 2">
    <location>
        <begin position="26"/>
        <end position="28"/>
    </location>
    <ligand>
        <name>shikimate</name>
        <dbReference type="ChEBI" id="CHEBI:36208"/>
    </ligand>
</feature>
<feature type="binding site" evidence="1 3">
    <location>
        <position position="73"/>
    </location>
    <ligand>
        <name>shikimate</name>
        <dbReference type="ChEBI" id="CHEBI:36208"/>
    </ligand>
</feature>
<feature type="binding site" evidence="1 3">
    <location>
        <position position="98"/>
    </location>
    <ligand>
        <name>shikimate</name>
        <dbReference type="ChEBI" id="CHEBI:36208"/>
    </ligand>
</feature>
<feature type="binding site" evidence="1 3">
    <location>
        <position position="113"/>
    </location>
    <ligand>
        <name>shikimate</name>
        <dbReference type="ChEBI" id="CHEBI:36208"/>
    </ligand>
</feature>
<feature type="binding site" evidence="1 3">
    <location>
        <begin position="137"/>
        <end position="141"/>
    </location>
    <ligand>
        <name>NADP(+)</name>
        <dbReference type="ChEBI" id="CHEBI:58349"/>
    </ligand>
</feature>
<feature type="binding site" evidence="2">
    <location>
        <begin position="161"/>
        <end position="164"/>
    </location>
    <ligand>
        <name>NAD(+)</name>
        <dbReference type="ChEBI" id="CHEBI:57540"/>
    </ligand>
</feature>
<feature type="binding site" evidence="2">
    <location>
        <position position="214"/>
    </location>
    <ligand>
        <name>NADP(+)</name>
        <dbReference type="ChEBI" id="CHEBI:58349"/>
    </ligand>
</feature>
<feature type="binding site" evidence="1 3">
    <location>
        <position position="238"/>
    </location>
    <ligand>
        <name>NADP(+)</name>
        <dbReference type="ChEBI" id="CHEBI:58349"/>
    </ligand>
</feature>
<feature type="binding site" evidence="1">
    <location>
        <position position="240"/>
    </location>
    <ligand>
        <name>shikimate</name>
        <dbReference type="ChEBI" id="CHEBI:36208"/>
    </ligand>
</feature>
<feature type="binding site" evidence="1 3">
    <location>
        <position position="261"/>
    </location>
    <ligand>
        <name>NADP(+)</name>
        <dbReference type="ChEBI" id="CHEBI:58349"/>
    </ligand>
</feature>
<feature type="strand" evidence="4">
    <location>
        <begin position="14"/>
        <end position="22"/>
    </location>
</feature>
<feature type="helix" evidence="4">
    <location>
        <begin position="28"/>
        <end position="39"/>
    </location>
</feature>
<feature type="strand" evidence="4">
    <location>
        <begin position="43"/>
        <end position="49"/>
    </location>
</feature>
<feature type="helix" evidence="4">
    <location>
        <begin position="52"/>
        <end position="64"/>
    </location>
</feature>
<feature type="strand" evidence="4">
    <location>
        <begin position="69"/>
        <end position="72"/>
    </location>
</feature>
<feature type="turn" evidence="4">
    <location>
        <begin position="77"/>
        <end position="79"/>
    </location>
</feature>
<feature type="helix" evidence="4">
    <location>
        <begin position="80"/>
        <end position="83"/>
    </location>
</feature>
<feature type="strand" evidence="4">
    <location>
        <begin position="85"/>
        <end position="87"/>
    </location>
</feature>
<feature type="helix" evidence="4">
    <location>
        <begin position="89"/>
        <end position="94"/>
    </location>
</feature>
<feature type="strand" evidence="4">
    <location>
        <begin position="98"/>
        <end position="103"/>
    </location>
</feature>
<feature type="strand" evidence="4">
    <location>
        <begin position="106"/>
        <end position="110"/>
    </location>
</feature>
<feature type="helix" evidence="4">
    <location>
        <begin position="113"/>
        <end position="123"/>
    </location>
</feature>
<feature type="strand" evidence="4">
    <location>
        <begin position="131"/>
        <end position="136"/>
    </location>
</feature>
<feature type="helix" evidence="4">
    <location>
        <begin position="140"/>
        <end position="151"/>
    </location>
</feature>
<feature type="strand" evidence="4">
    <location>
        <begin position="155"/>
        <end position="161"/>
    </location>
</feature>
<feature type="helix" evidence="4">
    <location>
        <begin position="167"/>
        <end position="180"/>
    </location>
</feature>
<feature type="strand" evidence="4">
    <location>
        <begin position="184"/>
        <end position="189"/>
    </location>
</feature>
<feature type="helix" evidence="4">
    <location>
        <begin position="193"/>
        <end position="201"/>
    </location>
</feature>
<feature type="strand" evidence="4">
    <location>
        <begin position="204"/>
        <end position="208"/>
    </location>
</feature>
<feature type="helix" evidence="4">
    <location>
        <begin position="226"/>
        <end position="228"/>
    </location>
</feature>
<feature type="strand" evidence="4">
    <location>
        <begin position="234"/>
        <end position="238"/>
    </location>
</feature>
<feature type="strand" evidence="4">
    <location>
        <begin position="241"/>
        <end position="244"/>
    </location>
</feature>
<feature type="helix" evidence="4">
    <location>
        <begin position="246"/>
        <end position="253"/>
    </location>
</feature>
<feature type="strand" evidence="4">
    <location>
        <begin position="257"/>
        <end position="259"/>
    </location>
</feature>
<feature type="helix" evidence="4">
    <location>
        <begin position="262"/>
        <end position="277"/>
    </location>
</feature>
<feature type="helix" evidence="4">
    <location>
        <begin position="283"/>
        <end position="290"/>
    </location>
</feature>
<reference key="1">
    <citation type="journal article" date="2001" name="Science">
        <title>Comparative genomics of Listeria species.</title>
        <authorList>
            <person name="Glaser P."/>
            <person name="Frangeul L."/>
            <person name="Buchrieser C."/>
            <person name="Rusniok C."/>
            <person name="Amend A."/>
            <person name="Baquero F."/>
            <person name="Berche P."/>
            <person name="Bloecker H."/>
            <person name="Brandt P."/>
            <person name="Chakraborty T."/>
            <person name="Charbit A."/>
            <person name="Chetouani F."/>
            <person name="Couve E."/>
            <person name="de Daruvar A."/>
            <person name="Dehoux P."/>
            <person name="Domann E."/>
            <person name="Dominguez-Bernal G."/>
            <person name="Duchaud E."/>
            <person name="Durant L."/>
            <person name="Dussurget O."/>
            <person name="Entian K.-D."/>
            <person name="Fsihi H."/>
            <person name="Garcia-del Portillo F."/>
            <person name="Garrido P."/>
            <person name="Gautier L."/>
            <person name="Goebel W."/>
            <person name="Gomez-Lopez N."/>
            <person name="Hain T."/>
            <person name="Hauf J."/>
            <person name="Jackson D."/>
            <person name="Jones L.-M."/>
            <person name="Kaerst U."/>
            <person name="Kreft J."/>
            <person name="Kuhn M."/>
            <person name="Kunst F."/>
            <person name="Kurapkat G."/>
            <person name="Madueno E."/>
            <person name="Maitournam A."/>
            <person name="Mata Vicente J."/>
            <person name="Ng E."/>
            <person name="Nedjari H."/>
            <person name="Nordsiek G."/>
            <person name="Novella S."/>
            <person name="de Pablos B."/>
            <person name="Perez-Diaz J.-C."/>
            <person name="Purcell R."/>
            <person name="Remmel B."/>
            <person name="Rose M."/>
            <person name="Schlueter T."/>
            <person name="Simoes N."/>
            <person name="Tierrez A."/>
            <person name="Vazquez-Boland J.-A."/>
            <person name="Voss H."/>
            <person name="Wehland J."/>
            <person name="Cossart P."/>
        </authorList>
    </citation>
    <scope>NUCLEOTIDE SEQUENCE [LARGE SCALE GENOMIC DNA]</scope>
    <source>
        <strain>ATCC BAA-679 / EGD-e</strain>
    </source>
</reference>
<reference key="2">
    <citation type="submission" date="2011-09" db="PDB data bank">
        <title>Crystal structure of shikimate 5-dehydrogenase Listeria monocytogenes in complex with shikimate and NAD.</title>
        <authorList>
            <consortium name="Center for Structural Genomics of Infectious Diseases (CSGID)"/>
        </authorList>
    </citation>
    <scope>X-RAY CRYSTALLOGRAPHY (1.45 ANGSTROMS) IN COMPLEX WITH SHIKIMATE AND NADP</scope>
    <scope>SUBUNIT</scope>
</reference>
<evidence type="ECO:0000255" key="1">
    <source>
        <dbReference type="HAMAP-Rule" id="MF_00222"/>
    </source>
</evidence>
<evidence type="ECO:0000269" key="2">
    <source ref="2"/>
</evidence>
<evidence type="ECO:0000305" key="3">
    <source ref="2"/>
</evidence>
<evidence type="ECO:0007829" key="4">
    <source>
        <dbReference type="PDB" id="3TNL"/>
    </source>
</evidence>
<sequence>MTNKITERITGHTELIGLIATPIRHSLSPTMHNEAFAKLGLDYVYLAFEVGDKELKDVVQGFRAMNLRGWNVSMPNKTNIHKYLDKLSPAAELVGAVNTVVNDDGVLTGHITDGTGYMRALKEAGHDIIGKKMTICGAGGAATAICIQAALDGVKEISIFNRKDDFYANAEKTVEKINSKTDCKAQLFDIEDHEQLRKEIAESVIFTNATGVGMKPFEGETLLPSADMLRPELIVSDVVYKPTKTRLLEIAEEQGCQTLNGLGMMLWQGAKAFEIWTHKEMPVDYIKEILF</sequence>
<name>AROE_LISMO</name>
<comment type="function">
    <text evidence="1">Involved in the biosynthesis of the chorismate, which leads to the biosynthesis of aromatic amino acids. Catalyzes the reversible NADPH linked reduction of 3-dehydroshikimate (DHSA) to yield shikimate (SA).</text>
</comment>
<comment type="catalytic activity">
    <reaction evidence="1">
        <text>shikimate + NADP(+) = 3-dehydroshikimate + NADPH + H(+)</text>
        <dbReference type="Rhea" id="RHEA:17737"/>
        <dbReference type="ChEBI" id="CHEBI:15378"/>
        <dbReference type="ChEBI" id="CHEBI:16630"/>
        <dbReference type="ChEBI" id="CHEBI:36208"/>
        <dbReference type="ChEBI" id="CHEBI:57783"/>
        <dbReference type="ChEBI" id="CHEBI:58349"/>
        <dbReference type="EC" id="1.1.1.25"/>
    </reaction>
</comment>
<comment type="pathway">
    <text evidence="1">Metabolic intermediate biosynthesis; chorismate biosynthesis; chorismate from D-erythrose 4-phosphate and phosphoenolpyruvate: step 4/7.</text>
</comment>
<comment type="subunit">
    <text evidence="1 2">Homodimer or homotetramer.</text>
</comment>
<comment type="similarity">
    <text evidence="1">Belongs to the shikimate dehydrogenase family.</text>
</comment>
<gene>
    <name evidence="1" type="primary">aroE</name>
    <name type="ordered locus">lmo0490</name>
</gene>